<sequence length="464" mass="53235">MGVSKLDILYRRLLLTKLFIRGWGRPEDLKRLFEFRKMIGNRERCQNLVSSDYPVHIDKVEEQSDCKILDGHFVSPMAHYVPGIMPIESVIARFQFIVPKEWNSRYRPVCIHLAGTGDHHYWRRRTLMARPMIKEARMASLLLENPYYILLKPKDQVRSSLKNVSDLFVMGGALILESAALLHWLEREGYGPLGMTGISMGGHMASLAVSNWPKPMPLIPCLSWSTASGVFTTGVLSKSINWRELEKQYYTQTVYEEEIIHMLEYCGTDSFKMGHEFMKHFPSNEDKLTNLNLVSRTLNLDMRDQVVSPKHAECHHSGKASISATSKGQLLQDTAKVERLNQTLTTNKSCFASYNPQSLHLLSREQRRSNLQKESLIFMKGVMDECTHVANFSVPVDPSLIIVVQAKEDAYIPRTGVRSLQEIWPGCEIRYLEGGHISAYLFKQGLFRQAIYDAFERFLHKYAN</sequence>
<comment type="subcellular location">
    <subcellularLocation>
        <location evidence="2">Secreted</location>
    </subcellularLocation>
</comment>
<comment type="similarity">
    <text evidence="2">Belongs to the AB hydrolase superfamily.</text>
</comment>
<comment type="sequence caution" evidence="2">
    <conflict type="erroneous initiation">
        <sequence resource="EMBL-CDS" id="AAH86604"/>
    </conflict>
</comment>
<dbReference type="EMBL" id="AABR03014994">
    <property type="status" value="NOT_ANNOTATED_CDS"/>
    <property type="molecule type" value="Genomic_DNA"/>
</dbReference>
<dbReference type="EMBL" id="AABR03016806">
    <property type="status" value="NOT_ANNOTATED_CDS"/>
    <property type="molecule type" value="Genomic_DNA"/>
</dbReference>
<dbReference type="EMBL" id="BC086604">
    <property type="protein sequence ID" value="AAH86604.1"/>
    <property type="status" value="ALT_INIT"/>
    <property type="molecule type" value="mRNA"/>
</dbReference>
<dbReference type="EMBL" id="BC098046">
    <property type="protein sequence ID" value="AAH98046.1"/>
    <property type="molecule type" value="mRNA"/>
</dbReference>
<dbReference type="RefSeq" id="NP_001020210.2">
    <property type="nucleotide sequence ID" value="NM_001025039.2"/>
</dbReference>
<dbReference type="FunCoup" id="Q4V7A8">
    <property type="interactions" value="600"/>
</dbReference>
<dbReference type="STRING" id="10116.ENSRNOP00000059389"/>
<dbReference type="ESTHER" id="rat-cd029">
    <property type="family name" value="ABHD18"/>
</dbReference>
<dbReference type="CarbonylDB" id="Q4V7A8"/>
<dbReference type="GlyCosmos" id="Q4V7A8">
    <property type="glycosylation" value="1 site, No reported glycans"/>
</dbReference>
<dbReference type="GlyGen" id="Q4V7A8">
    <property type="glycosylation" value="1 site"/>
</dbReference>
<dbReference type="PhosphoSitePlus" id="Q4V7A8"/>
<dbReference type="PaxDb" id="10116-ENSRNOP00000059389"/>
<dbReference type="GeneID" id="499602"/>
<dbReference type="KEGG" id="rno:499602"/>
<dbReference type="UCSC" id="RGD:1563987">
    <property type="organism name" value="rat"/>
</dbReference>
<dbReference type="AGR" id="RGD:1563987"/>
<dbReference type="CTD" id="80167"/>
<dbReference type="RGD" id="1563987">
    <property type="gene designation" value="Abhd18"/>
</dbReference>
<dbReference type="eggNOG" id="KOG1551">
    <property type="taxonomic scope" value="Eukaryota"/>
</dbReference>
<dbReference type="InParanoid" id="Q4V7A8"/>
<dbReference type="OrthoDB" id="9987145at2759"/>
<dbReference type="PhylomeDB" id="Q4V7A8"/>
<dbReference type="TreeFam" id="TF314683"/>
<dbReference type="PRO" id="PR:Q4V7A8"/>
<dbReference type="Proteomes" id="UP000002494">
    <property type="component" value="Unplaced"/>
</dbReference>
<dbReference type="GO" id="GO:0005576">
    <property type="term" value="C:extracellular region"/>
    <property type="evidence" value="ECO:0007669"/>
    <property type="project" value="UniProtKB-SubCell"/>
</dbReference>
<dbReference type="Gene3D" id="3.40.50.1820">
    <property type="entry name" value="alpha/beta hydrolase"/>
    <property type="match status" value="1"/>
</dbReference>
<dbReference type="InterPro" id="IPR029058">
    <property type="entry name" value="AB_hydrolase_fold"/>
</dbReference>
<dbReference type="InterPro" id="IPR019149">
    <property type="entry name" value="ABHD18"/>
</dbReference>
<dbReference type="PANTHER" id="PTHR13617">
    <property type="entry name" value="PROTEIN ABHD18"/>
    <property type="match status" value="1"/>
</dbReference>
<dbReference type="PANTHER" id="PTHR13617:SF14">
    <property type="entry name" value="PROTEIN ABHD18"/>
    <property type="match status" value="1"/>
</dbReference>
<dbReference type="Pfam" id="PF09752">
    <property type="entry name" value="ABHD18"/>
    <property type="match status" value="1"/>
</dbReference>
<dbReference type="SUPFAM" id="SSF53474">
    <property type="entry name" value="alpha/beta-Hydrolases"/>
    <property type="match status" value="1"/>
</dbReference>
<accession>Q4V7A8</accession>
<accession>Q5RJK2</accession>
<keyword id="KW-0325">Glycoprotein</keyword>
<keyword id="KW-1185">Reference proteome</keyword>
<keyword id="KW-0964">Secreted</keyword>
<keyword id="KW-0732">Signal</keyword>
<name>ABD18_RAT</name>
<proteinExistence type="evidence at transcript level"/>
<protein>
    <recommendedName>
        <fullName evidence="2">Protein ABHD18</fullName>
    </recommendedName>
    <alternativeName>
        <fullName evidence="2">Alpha/beta hydrolase domain-containing protein 18</fullName>
        <shortName evidence="3">Abhydrolase domain-containing protein 18</shortName>
    </alternativeName>
</protein>
<evidence type="ECO:0000255" key="1"/>
<evidence type="ECO:0000305" key="2"/>
<evidence type="ECO:0000312" key="3">
    <source>
        <dbReference type="RGD" id="1563987"/>
    </source>
</evidence>
<gene>
    <name evidence="3" type="primary">Abhd18</name>
</gene>
<reference key="1">
    <citation type="journal article" date="2004" name="Nature">
        <title>Genome sequence of the Brown Norway rat yields insights into mammalian evolution.</title>
        <authorList>
            <person name="Gibbs R.A."/>
            <person name="Weinstock G.M."/>
            <person name="Metzker M.L."/>
            <person name="Muzny D.M."/>
            <person name="Sodergren E.J."/>
            <person name="Scherer S."/>
            <person name="Scott G."/>
            <person name="Steffen D."/>
            <person name="Worley K.C."/>
            <person name="Burch P.E."/>
            <person name="Okwuonu G."/>
            <person name="Hines S."/>
            <person name="Lewis L."/>
            <person name="Deramo C."/>
            <person name="Delgado O."/>
            <person name="Dugan-Rocha S."/>
            <person name="Miner G."/>
            <person name="Morgan M."/>
            <person name="Hawes A."/>
            <person name="Gill R."/>
            <person name="Holt R.A."/>
            <person name="Adams M.D."/>
            <person name="Amanatides P.G."/>
            <person name="Baden-Tillson H."/>
            <person name="Barnstead M."/>
            <person name="Chin S."/>
            <person name="Evans C.A."/>
            <person name="Ferriera S."/>
            <person name="Fosler C."/>
            <person name="Glodek A."/>
            <person name="Gu Z."/>
            <person name="Jennings D."/>
            <person name="Kraft C.L."/>
            <person name="Nguyen T."/>
            <person name="Pfannkoch C.M."/>
            <person name="Sitter C."/>
            <person name="Sutton G.G."/>
            <person name="Venter J.C."/>
            <person name="Woodage T."/>
            <person name="Smith D."/>
            <person name="Lee H.-M."/>
            <person name="Gustafson E."/>
            <person name="Cahill P."/>
            <person name="Kana A."/>
            <person name="Doucette-Stamm L."/>
            <person name="Weinstock K."/>
            <person name="Fechtel K."/>
            <person name="Weiss R.B."/>
            <person name="Dunn D.M."/>
            <person name="Green E.D."/>
            <person name="Blakesley R.W."/>
            <person name="Bouffard G.G."/>
            <person name="De Jong P.J."/>
            <person name="Osoegawa K."/>
            <person name="Zhu B."/>
            <person name="Marra M."/>
            <person name="Schein J."/>
            <person name="Bosdet I."/>
            <person name="Fjell C."/>
            <person name="Jones S."/>
            <person name="Krzywinski M."/>
            <person name="Mathewson C."/>
            <person name="Siddiqui A."/>
            <person name="Wye N."/>
            <person name="McPherson J."/>
            <person name="Zhao S."/>
            <person name="Fraser C.M."/>
            <person name="Shetty J."/>
            <person name="Shatsman S."/>
            <person name="Geer K."/>
            <person name="Chen Y."/>
            <person name="Abramzon S."/>
            <person name="Nierman W.C."/>
            <person name="Havlak P.H."/>
            <person name="Chen R."/>
            <person name="Durbin K.J."/>
            <person name="Egan A."/>
            <person name="Ren Y."/>
            <person name="Song X.-Z."/>
            <person name="Li B."/>
            <person name="Liu Y."/>
            <person name="Qin X."/>
            <person name="Cawley S."/>
            <person name="Cooney A.J."/>
            <person name="D'Souza L.M."/>
            <person name="Martin K."/>
            <person name="Wu J.Q."/>
            <person name="Gonzalez-Garay M.L."/>
            <person name="Jackson A.R."/>
            <person name="Kalafus K.J."/>
            <person name="McLeod M.P."/>
            <person name="Milosavljevic A."/>
            <person name="Virk D."/>
            <person name="Volkov A."/>
            <person name="Wheeler D.A."/>
            <person name="Zhang Z."/>
            <person name="Bailey J.A."/>
            <person name="Eichler E.E."/>
            <person name="Tuzun E."/>
            <person name="Birney E."/>
            <person name="Mongin E."/>
            <person name="Ureta-Vidal A."/>
            <person name="Woodwark C."/>
            <person name="Zdobnov E."/>
            <person name="Bork P."/>
            <person name="Suyama M."/>
            <person name="Torrents D."/>
            <person name="Alexandersson M."/>
            <person name="Trask B.J."/>
            <person name="Young J.M."/>
            <person name="Huang H."/>
            <person name="Wang H."/>
            <person name="Xing H."/>
            <person name="Daniels S."/>
            <person name="Gietzen D."/>
            <person name="Schmidt J."/>
            <person name="Stevens K."/>
            <person name="Vitt U."/>
            <person name="Wingrove J."/>
            <person name="Camara F."/>
            <person name="Mar Alba M."/>
            <person name="Abril J.F."/>
            <person name="Guigo R."/>
            <person name="Smit A."/>
            <person name="Dubchak I."/>
            <person name="Rubin E.M."/>
            <person name="Couronne O."/>
            <person name="Poliakov A."/>
            <person name="Huebner N."/>
            <person name="Ganten D."/>
            <person name="Goesele C."/>
            <person name="Hummel O."/>
            <person name="Kreitler T."/>
            <person name="Lee Y.-A."/>
            <person name="Monti J."/>
            <person name="Schulz H."/>
            <person name="Zimdahl H."/>
            <person name="Himmelbauer H."/>
            <person name="Lehrach H."/>
            <person name="Jacob H.J."/>
            <person name="Bromberg S."/>
            <person name="Gullings-Handley J."/>
            <person name="Jensen-Seaman M.I."/>
            <person name="Kwitek A.E."/>
            <person name="Lazar J."/>
            <person name="Pasko D."/>
            <person name="Tonellato P.J."/>
            <person name="Twigger S."/>
            <person name="Ponting C.P."/>
            <person name="Duarte J.M."/>
            <person name="Rice S."/>
            <person name="Goodstadt L."/>
            <person name="Beatson S.A."/>
            <person name="Emes R.D."/>
            <person name="Winter E.E."/>
            <person name="Webber C."/>
            <person name="Brandt P."/>
            <person name="Nyakatura G."/>
            <person name="Adetobi M."/>
            <person name="Chiaromonte F."/>
            <person name="Elnitski L."/>
            <person name="Eswara P."/>
            <person name="Hardison R.C."/>
            <person name="Hou M."/>
            <person name="Kolbe D."/>
            <person name="Makova K."/>
            <person name="Miller W."/>
            <person name="Nekrutenko A."/>
            <person name="Riemer C."/>
            <person name="Schwartz S."/>
            <person name="Taylor J."/>
            <person name="Yang S."/>
            <person name="Zhang Y."/>
            <person name="Lindpaintner K."/>
            <person name="Andrews T.D."/>
            <person name="Caccamo M."/>
            <person name="Clamp M."/>
            <person name="Clarke L."/>
            <person name="Curwen V."/>
            <person name="Durbin R.M."/>
            <person name="Eyras E."/>
            <person name="Searle S.M."/>
            <person name="Cooper G.M."/>
            <person name="Batzoglou S."/>
            <person name="Brudno M."/>
            <person name="Sidow A."/>
            <person name="Stone E.A."/>
            <person name="Payseur B.A."/>
            <person name="Bourque G."/>
            <person name="Lopez-Otin C."/>
            <person name="Puente X.S."/>
            <person name="Chakrabarti K."/>
            <person name="Chatterji S."/>
            <person name="Dewey C."/>
            <person name="Pachter L."/>
            <person name="Bray N."/>
            <person name="Yap V.B."/>
            <person name="Caspi A."/>
            <person name="Tesler G."/>
            <person name="Pevzner P.A."/>
            <person name="Haussler D."/>
            <person name="Roskin K.M."/>
            <person name="Baertsch R."/>
            <person name="Clawson H."/>
            <person name="Furey T.S."/>
            <person name="Hinrichs A.S."/>
            <person name="Karolchik D."/>
            <person name="Kent W.J."/>
            <person name="Rosenbloom K.R."/>
            <person name="Trumbower H."/>
            <person name="Weirauch M."/>
            <person name="Cooper D.N."/>
            <person name="Stenson P.D."/>
            <person name="Ma B."/>
            <person name="Brent M."/>
            <person name="Arumugam M."/>
            <person name="Shteynberg D."/>
            <person name="Copley R.R."/>
            <person name="Taylor M.S."/>
            <person name="Riethman H."/>
            <person name="Mudunuri U."/>
            <person name="Peterson J."/>
            <person name="Guyer M."/>
            <person name="Felsenfeld A."/>
            <person name="Old S."/>
            <person name="Mockrin S."/>
            <person name="Collins F.S."/>
        </authorList>
    </citation>
    <scope>NUCLEOTIDE SEQUENCE [LARGE SCALE GENOMIC DNA]</scope>
    <source>
        <strain>Brown Norway</strain>
    </source>
</reference>
<reference key="2">
    <citation type="journal article" date="2004" name="Genome Res.">
        <title>The status, quality, and expansion of the NIH full-length cDNA project: the Mammalian Gene Collection (MGC).</title>
        <authorList>
            <consortium name="The MGC Project Team"/>
        </authorList>
    </citation>
    <scope>NUCLEOTIDE SEQUENCE [LARGE SCALE MRNA] OF 98-464</scope>
    <source>
        <tissue>Brain</tissue>
        <tissue>Testis</tissue>
    </source>
</reference>
<feature type="signal peptide" evidence="1">
    <location>
        <begin position="1"/>
        <end position="24"/>
    </location>
</feature>
<feature type="chain" id="PRO_0000301962" description="Protein ABHD18">
    <location>
        <begin position="25"/>
        <end position="464"/>
    </location>
</feature>
<feature type="glycosylation site" description="N-linked (GlcNAc...) asparagine" evidence="1">
    <location>
        <position position="341"/>
    </location>
</feature>
<feature type="sequence conflict" description="In Ref. 2; AAH98046." evidence="2" ref="2">
    <original>ILL</original>
    <variation>GCR</variation>
    <location>
        <begin position="149"/>
        <end position="151"/>
    </location>
</feature>
<organism>
    <name type="scientific">Rattus norvegicus</name>
    <name type="common">Rat</name>
    <dbReference type="NCBI Taxonomy" id="10116"/>
    <lineage>
        <taxon>Eukaryota</taxon>
        <taxon>Metazoa</taxon>
        <taxon>Chordata</taxon>
        <taxon>Craniata</taxon>
        <taxon>Vertebrata</taxon>
        <taxon>Euteleostomi</taxon>
        <taxon>Mammalia</taxon>
        <taxon>Eutheria</taxon>
        <taxon>Euarchontoglires</taxon>
        <taxon>Glires</taxon>
        <taxon>Rodentia</taxon>
        <taxon>Myomorpha</taxon>
        <taxon>Muroidea</taxon>
        <taxon>Muridae</taxon>
        <taxon>Murinae</taxon>
        <taxon>Rattus</taxon>
    </lineage>
</organism>